<evidence type="ECO:0000250" key="1">
    <source>
        <dbReference type="UniProtKB" id="P17362"/>
    </source>
</evidence>
<evidence type="ECO:0000305" key="2"/>
<feature type="chain" id="PRO_0000448173" description="IFN signaling evasion protein OPG029">
    <location>
        <begin position="1"/>
        <end position="156"/>
    </location>
</feature>
<dbReference type="EMBL" id="X69198">
    <property type="protein sequence ID" value="CAA48950.1"/>
    <property type="molecule type" value="Genomic_DNA"/>
</dbReference>
<dbReference type="PIR" id="I36837">
    <property type="entry name" value="I36837"/>
</dbReference>
<dbReference type="RefSeq" id="NP_042053.1">
    <property type="nucleotide sequence ID" value="NC_001611.1"/>
</dbReference>
<dbReference type="SMR" id="P0DSX3"/>
<dbReference type="GeneID" id="1486404"/>
<dbReference type="KEGG" id="vg:1486404"/>
<dbReference type="Proteomes" id="UP000002060">
    <property type="component" value="Segment"/>
</dbReference>
<dbReference type="FunFam" id="1.10.437.20:FF:000002">
    <property type="entry name" value="Protein C6"/>
    <property type="match status" value="1"/>
</dbReference>
<dbReference type="Gene3D" id="1.10.437.20">
    <property type="entry name" value="dsDNA poxvirus"/>
    <property type="match status" value="1"/>
</dbReference>
<dbReference type="InterPro" id="IPR022819">
    <property type="entry name" value="Poxvirus_Bcl-2-like"/>
</dbReference>
<dbReference type="InterPro" id="IPR043018">
    <property type="entry name" value="Poxvirus_sf"/>
</dbReference>
<dbReference type="Pfam" id="PF06227">
    <property type="entry name" value="Poxv_Bcl-2-like"/>
    <property type="match status" value="1"/>
</dbReference>
<keyword id="KW-0244">Early protein</keyword>
<keyword id="KW-1185">Reference proteome</keyword>
<accession>P0DSX3</accession>
<accession>P34014</accession>
<gene>
    <name type="primary">OPG029</name>
    <name type="synonym">B16L</name>
    <name type="synonym">C6L</name>
    <name type="synonym">D12L</name>
    <name type="synonym">D9L</name>
</gene>
<reference key="1">
    <citation type="journal article" date="1993" name="FEBS Lett.">
        <title>Genes of variola and vaccinia viruses necessary to overcome the host protective mechanisms.</title>
        <authorList>
            <person name="Shchelkunov S.N."/>
            <person name="Blinov V.M."/>
            <person name="Sandakhchiev L.S."/>
        </authorList>
    </citation>
    <scope>NUCLEOTIDE SEQUENCE [GENOMIC DNA]</scope>
</reference>
<protein>
    <recommendedName>
        <fullName>IFN signaling evasion protein OPG029</fullName>
    </recommendedName>
</protein>
<proteinExistence type="inferred from homology"/>
<name>PG029_VAR67</name>
<comment type="function">
    <text evidence="1">Prevents establishment of cellular antiviral state by blocking virus-induced phosphorylation and activation of interferon regulatory factors 3/IRF3 and 7/IRF7, transcription factors critical for the induction of interferons alpha and beta. This blockage is produced through the inhibition of host TBK1, by binding host TBK1 adapter proteins TBKBP1 and AZI2, thereby producing a strong inhibition of the phosphorylation and activation of IRF3 and IRF7. Also acts as an inhibitor of the cellular response to type I IFN by interacting with host STAT2. Mechanistically, exerts its inhibitory effect after host ISGF3 complex (composed of STAT1, STAT2 and IRF9) binding to the interferon stimulated response element (ISRE).</text>
</comment>
<comment type="subunit">
    <text evidence="1">Interacts with host TANK, TBKBP1 and AZI2; these interactions prevent interferon production. Interacts with host STAT2.</text>
</comment>
<comment type="induction">
    <text evidence="1">Expressed in the early phase of the viral replicative cycle.</text>
</comment>
<comment type="similarity">
    <text evidence="2">Belongs to the orthopoxvirus OPG029 family.</text>
</comment>
<organism>
    <name type="scientific">Variola virus (isolate Human/India/Ind3/1967)</name>
    <name type="common">VARV</name>
    <name type="synonym">Smallpox virus</name>
    <dbReference type="NCBI Taxonomy" id="587200"/>
    <lineage>
        <taxon>Viruses</taxon>
        <taxon>Varidnaviria</taxon>
        <taxon>Bamfordvirae</taxon>
        <taxon>Nucleocytoviricota</taxon>
        <taxon>Pokkesviricetes</taxon>
        <taxon>Chitovirales</taxon>
        <taxon>Poxviridae</taxon>
        <taxon>Chordopoxvirinae</taxon>
        <taxon>Orthopoxvirus</taxon>
        <taxon>Variola virus</taxon>
    </lineage>
</organism>
<sequence length="156" mass="18042">MNVYNKADSFSLESDSIKDVIHDYICWLSMTDEMRPSIGNVFKAMETFKIDAVRYYDGNIYDLAKDINAMSFDSFIRSLQNISSKKDKLTVYGTMGLLSIVVDINKGCDISNIKFAAGIIILMEYIFDNTDMSHLKVALYRRIQRRYPIDDDEEDR</sequence>
<organismHost>
    <name type="scientific">Homo sapiens</name>
    <name type="common">Human</name>
    <dbReference type="NCBI Taxonomy" id="9606"/>
</organismHost>